<comment type="function">
    <text evidence="1">Together with its co-chaperonin GroES, plays an essential role in assisting protein folding. The GroEL-GroES system forms a nano-cage that allows encapsulation of the non-native substrate proteins and provides a physical environment optimized to promote and accelerate protein folding.</text>
</comment>
<comment type="catalytic activity">
    <reaction evidence="1">
        <text>ATP + H2O + a folded polypeptide = ADP + phosphate + an unfolded polypeptide.</text>
        <dbReference type="EC" id="5.6.1.7"/>
    </reaction>
</comment>
<comment type="subunit">
    <text evidence="1">Forms a cylinder of 14 subunits composed of two heptameric rings stacked back-to-back. Interacts with the co-chaperonin GroES.</text>
</comment>
<comment type="subcellular location">
    <subcellularLocation>
        <location evidence="1">Cytoplasm</location>
    </subcellularLocation>
</comment>
<comment type="similarity">
    <text evidence="1 2">Belongs to the chaperonin (HSP60) family.</text>
</comment>
<evidence type="ECO:0000255" key="1">
    <source>
        <dbReference type="HAMAP-Rule" id="MF_00600"/>
    </source>
</evidence>
<evidence type="ECO:0000305" key="2"/>
<keyword id="KW-0067">ATP-binding</keyword>
<keyword id="KW-0143">Chaperone</keyword>
<keyword id="KW-0963">Cytoplasm</keyword>
<keyword id="KW-0413">Isomerase</keyword>
<keyword id="KW-0547">Nucleotide-binding</keyword>
<name>CH602_CHLPN</name>
<proteinExistence type="inferred from homology"/>
<protein>
    <recommendedName>
        <fullName evidence="1">Chaperonin GroEL 2</fullName>
        <ecNumber evidence="1">5.6.1.7</ecNumber>
    </recommendedName>
    <alternativeName>
        <fullName evidence="1">60 kDa chaperonin 2</fullName>
    </alternativeName>
    <alternativeName>
        <fullName evidence="1">Chaperonin-60 2</fullName>
        <shortName evidence="1">Cpn60 2</shortName>
    </alternativeName>
</protein>
<accession>Q9Z7C9</accession>
<accession>Q9JS18</accession>
<reference key="1">
    <citation type="journal article" date="1999" name="Nat. Genet.">
        <title>Comparative genomes of Chlamydia pneumoniae and C. trachomatis.</title>
        <authorList>
            <person name="Kalman S."/>
            <person name="Mitchell W.P."/>
            <person name="Marathe R."/>
            <person name="Lammel C.J."/>
            <person name="Fan J."/>
            <person name="Hyman R.W."/>
            <person name="Olinger L."/>
            <person name="Grimwood J."/>
            <person name="Davis R.W."/>
            <person name="Stephens R.S."/>
        </authorList>
    </citation>
    <scope>NUCLEOTIDE SEQUENCE [LARGE SCALE GENOMIC DNA]</scope>
    <source>
        <strain>CWL029</strain>
    </source>
</reference>
<reference key="2">
    <citation type="journal article" date="2000" name="Nucleic Acids Res.">
        <title>Genome sequences of Chlamydia trachomatis MoPn and Chlamydia pneumoniae AR39.</title>
        <authorList>
            <person name="Read T.D."/>
            <person name="Brunham R.C."/>
            <person name="Shen C."/>
            <person name="Gill S.R."/>
            <person name="Heidelberg J.F."/>
            <person name="White O."/>
            <person name="Hickey E.K."/>
            <person name="Peterson J.D."/>
            <person name="Utterback T.R."/>
            <person name="Berry K.J."/>
            <person name="Bass S."/>
            <person name="Linher K.D."/>
            <person name="Weidman J.F."/>
            <person name="Khouri H.M."/>
            <person name="Craven B."/>
            <person name="Bowman C."/>
            <person name="Dodson R.J."/>
            <person name="Gwinn M.L."/>
            <person name="Nelson W.C."/>
            <person name="DeBoy R.T."/>
            <person name="Kolonay J.F."/>
            <person name="McClarty G."/>
            <person name="Salzberg S.L."/>
            <person name="Eisen J.A."/>
            <person name="Fraser C.M."/>
        </authorList>
    </citation>
    <scope>NUCLEOTIDE SEQUENCE [LARGE SCALE GENOMIC DNA]</scope>
    <source>
        <strain>AR39</strain>
    </source>
</reference>
<reference key="3">
    <citation type="journal article" date="2000" name="Nucleic Acids Res.">
        <title>Comparison of whole genome sequences of Chlamydia pneumoniae J138 from Japan and CWL029 from USA.</title>
        <authorList>
            <person name="Shirai M."/>
            <person name="Hirakawa H."/>
            <person name="Kimoto M."/>
            <person name="Tabuchi M."/>
            <person name="Kishi F."/>
            <person name="Ouchi K."/>
            <person name="Shiba T."/>
            <person name="Ishii K."/>
            <person name="Hattori M."/>
            <person name="Kuhara S."/>
            <person name="Nakazawa T."/>
        </authorList>
    </citation>
    <scope>NUCLEOTIDE SEQUENCE [LARGE SCALE GENOMIC DNA]</scope>
    <source>
        <strain>J138</strain>
    </source>
</reference>
<reference key="4">
    <citation type="submission" date="2002-05" db="EMBL/GenBank/DDBJ databases">
        <title>The genome sequence of Chlamydia pneumoniae TW183 and comparison with other Chlamydia strains based on whole genome sequence analysis.</title>
        <authorList>
            <person name="Geng M.M."/>
            <person name="Schuhmacher A."/>
            <person name="Muehldorfer I."/>
            <person name="Bensch K.W."/>
            <person name="Schaefer K.P."/>
            <person name="Schneider S."/>
            <person name="Pohl T."/>
            <person name="Essig A."/>
            <person name="Marre R."/>
            <person name="Melchers K."/>
        </authorList>
    </citation>
    <scope>NUCLEOTIDE SEQUENCE [LARGE SCALE GENOMIC DNA]</scope>
    <source>
        <strain>TW-183</strain>
    </source>
</reference>
<sequence>MVWVFKSQFEGLSALKRGVHALTKAVTPAFGPRGYNVVIKKGKAPIVLTKNGIRIAKEIILQDAFESLGVKLAKEALLKVVEQTGDGSTTALVVIDALFTQGLKGIAAGLDPQEIKAGILLSVEMVYQQLQRQAIELQSPKDVLHVAMVAANHDVTLGTVVATVISQADLKGVFSSKDSGISKTRGLGKRVKSGYLSPYFVTRPETMDVVWEEALVLILSHSLVSLSEELIRYLELISEQNTHPLVIIAEDFDQNVLRTLILNKLRNGLPVCAVKAPGSRELRQVVLEDLAILTGATLIGQESENCEIPVSLDVLGRVKQVMITKETFTFLEGGGDAEIIQARKQELCLAIAGSTSESECQELEERLAIFIGSIPQVQITADTDTEQRERQFQLESALRATKAAMKGGIVPGGGVAFLRAAHAIEVPANLSSGMTFGFETLLQAVRTPLKVLAQNCGRSSEEVIHTILSHENPRFGYNGMTDTFEDLVDAGICDPLIVTTSSLKCAVSVSCLLLTSSFFISSRTKT</sequence>
<gene>
    <name evidence="1" type="primary">groEL2</name>
    <name evidence="1" type="synonym">groL2</name>
    <name type="ordered locus">CPn_0777</name>
    <name type="ordered locus">CP_1095</name>
    <name type="ordered locus">CpB0805</name>
</gene>
<feature type="chain" id="PRO_0000063334" description="Chaperonin GroEL 2">
    <location>
        <begin position="1"/>
        <end position="526"/>
    </location>
</feature>
<feature type="binding site" evidence="1">
    <location>
        <position position="50"/>
    </location>
    <ligand>
        <name>ATP</name>
        <dbReference type="ChEBI" id="CHEBI:30616"/>
    </ligand>
</feature>
<feature type="binding site" evidence="1">
    <location>
        <position position="413"/>
    </location>
    <ligand>
        <name>ATP</name>
        <dbReference type="ChEBI" id="CHEBI:30616"/>
    </ligand>
</feature>
<feature type="binding site" evidence="1">
    <location>
        <position position="494"/>
    </location>
    <ligand>
        <name>ATP</name>
        <dbReference type="ChEBI" id="CHEBI:30616"/>
    </ligand>
</feature>
<feature type="sequence variant" description="In strain: CWL029 and TW-183.">
    <original>G</original>
    <variation>R</variation>
    <location>
        <position position="353"/>
    </location>
</feature>
<organism>
    <name type="scientific">Chlamydia pneumoniae</name>
    <name type="common">Chlamydophila pneumoniae</name>
    <dbReference type="NCBI Taxonomy" id="83558"/>
    <lineage>
        <taxon>Bacteria</taxon>
        <taxon>Pseudomonadati</taxon>
        <taxon>Chlamydiota</taxon>
        <taxon>Chlamydiia</taxon>
        <taxon>Chlamydiales</taxon>
        <taxon>Chlamydiaceae</taxon>
        <taxon>Chlamydia/Chlamydophila group</taxon>
        <taxon>Chlamydia</taxon>
    </lineage>
</organism>
<dbReference type="EC" id="5.6.1.7" evidence="1"/>
<dbReference type="EMBL" id="AE001363">
    <property type="protein sequence ID" value="AAD18915.1"/>
    <property type="molecule type" value="Genomic_DNA"/>
</dbReference>
<dbReference type="EMBL" id="AE002161">
    <property type="protein sequence ID" value="AAF38865.1"/>
    <property type="molecule type" value="Genomic_DNA"/>
</dbReference>
<dbReference type="EMBL" id="BA000008">
    <property type="protein sequence ID" value="BAA98985.1"/>
    <property type="molecule type" value="Genomic_DNA"/>
</dbReference>
<dbReference type="EMBL" id="AE009440">
    <property type="protein sequence ID" value="AAP98734.1"/>
    <property type="molecule type" value="Genomic_DNA"/>
</dbReference>
<dbReference type="PIR" id="D72036">
    <property type="entry name" value="D72036"/>
</dbReference>
<dbReference type="PIR" id="F81504">
    <property type="entry name" value="F81504"/>
</dbReference>
<dbReference type="PIR" id="G86587">
    <property type="entry name" value="G86587"/>
</dbReference>
<dbReference type="RefSeq" id="NP_224972.1">
    <property type="nucleotide sequence ID" value="NC_000922.1"/>
</dbReference>
<dbReference type="RefSeq" id="WP_010883414.1">
    <property type="nucleotide sequence ID" value="NZ_LN847257.1"/>
</dbReference>
<dbReference type="SMR" id="Q9Z7C9"/>
<dbReference type="STRING" id="406984.CPK_ORF00183"/>
<dbReference type="GeneID" id="45050832"/>
<dbReference type="KEGG" id="cpa:CP_1095"/>
<dbReference type="KEGG" id="cpj:groEL_2"/>
<dbReference type="KEGG" id="cpn:CPn_0777"/>
<dbReference type="KEGG" id="cpt:CpB0805"/>
<dbReference type="PATRIC" id="fig|115713.3.peg.854"/>
<dbReference type="eggNOG" id="COG0459">
    <property type="taxonomic scope" value="Bacteria"/>
</dbReference>
<dbReference type="HOGENOM" id="CLU_016503_6_1_0"/>
<dbReference type="OrthoDB" id="9766614at2"/>
<dbReference type="Proteomes" id="UP000000583">
    <property type="component" value="Chromosome"/>
</dbReference>
<dbReference type="Proteomes" id="UP000000801">
    <property type="component" value="Chromosome"/>
</dbReference>
<dbReference type="GO" id="GO:0005737">
    <property type="term" value="C:cytoplasm"/>
    <property type="evidence" value="ECO:0007669"/>
    <property type="project" value="UniProtKB-SubCell"/>
</dbReference>
<dbReference type="GO" id="GO:0005524">
    <property type="term" value="F:ATP binding"/>
    <property type="evidence" value="ECO:0007669"/>
    <property type="project" value="UniProtKB-KW"/>
</dbReference>
<dbReference type="GO" id="GO:0140662">
    <property type="term" value="F:ATP-dependent protein folding chaperone"/>
    <property type="evidence" value="ECO:0007669"/>
    <property type="project" value="InterPro"/>
</dbReference>
<dbReference type="GO" id="GO:0016853">
    <property type="term" value="F:isomerase activity"/>
    <property type="evidence" value="ECO:0007669"/>
    <property type="project" value="UniProtKB-KW"/>
</dbReference>
<dbReference type="GO" id="GO:0042026">
    <property type="term" value="P:protein refolding"/>
    <property type="evidence" value="ECO:0007669"/>
    <property type="project" value="InterPro"/>
</dbReference>
<dbReference type="CDD" id="cd03344">
    <property type="entry name" value="GroEL"/>
    <property type="match status" value="1"/>
</dbReference>
<dbReference type="FunFam" id="3.50.7.10:FF:000001">
    <property type="entry name" value="60 kDa chaperonin"/>
    <property type="match status" value="1"/>
</dbReference>
<dbReference type="Gene3D" id="3.50.7.10">
    <property type="entry name" value="GroEL"/>
    <property type="match status" value="1"/>
</dbReference>
<dbReference type="Gene3D" id="1.10.560.10">
    <property type="entry name" value="GroEL-like equatorial domain"/>
    <property type="match status" value="1"/>
</dbReference>
<dbReference type="Gene3D" id="3.30.260.10">
    <property type="entry name" value="TCP-1-like chaperonin intermediate domain"/>
    <property type="match status" value="1"/>
</dbReference>
<dbReference type="InterPro" id="IPR001844">
    <property type="entry name" value="Cpn60/GroEL"/>
</dbReference>
<dbReference type="InterPro" id="IPR002423">
    <property type="entry name" value="Cpn60/GroEL/TCP-1"/>
</dbReference>
<dbReference type="InterPro" id="IPR027409">
    <property type="entry name" value="GroEL-like_apical_dom_sf"/>
</dbReference>
<dbReference type="InterPro" id="IPR027413">
    <property type="entry name" value="GROEL-like_equatorial_sf"/>
</dbReference>
<dbReference type="InterPro" id="IPR027410">
    <property type="entry name" value="TCP-1-like_intermed_sf"/>
</dbReference>
<dbReference type="NCBIfam" id="NF000592">
    <property type="entry name" value="PRK00013.1"/>
    <property type="match status" value="1"/>
</dbReference>
<dbReference type="NCBIfam" id="NF009487">
    <property type="entry name" value="PRK12849.1"/>
    <property type="match status" value="1"/>
</dbReference>
<dbReference type="PANTHER" id="PTHR45633">
    <property type="entry name" value="60 KDA HEAT SHOCK PROTEIN, MITOCHONDRIAL"/>
    <property type="match status" value="1"/>
</dbReference>
<dbReference type="Pfam" id="PF00118">
    <property type="entry name" value="Cpn60_TCP1"/>
    <property type="match status" value="2"/>
</dbReference>
<dbReference type="PRINTS" id="PR00298">
    <property type="entry name" value="CHAPERONIN60"/>
</dbReference>
<dbReference type="SUPFAM" id="SSF52029">
    <property type="entry name" value="GroEL apical domain-like"/>
    <property type="match status" value="1"/>
</dbReference>
<dbReference type="SUPFAM" id="SSF48592">
    <property type="entry name" value="GroEL equatorial domain-like"/>
    <property type="match status" value="1"/>
</dbReference>